<evidence type="ECO:0000255" key="1">
    <source>
        <dbReference type="HAMAP-Rule" id="MF_00736"/>
    </source>
</evidence>
<evidence type="ECO:0000305" key="2"/>
<reference key="1">
    <citation type="journal article" date="2016" name="Genome Announc.">
        <title>Complete genome sequence of Alkaliphilus metalliredigens strain QYMF, an alkaliphilic and metal-reducing bacterium isolated from borax-contaminated leachate ponds.</title>
        <authorList>
            <person name="Hwang C."/>
            <person name="Copeland A."/>
            <person name="Lucas S."/>
            <person name="Lapidus A."/>
            <person name="Barry K."/>
            <person name="Detter J.C."/>
            <person name="Glavina Del Rio T."/>
            <person name="Hammon N."/>
            <person name="Israni S."/>
            <person name="Dalin E."/>
            <person name="Tice H."/>
            <person name="Pitluck S."/>
            <person name="Chertkov O."/>
            <person name="Brettin T."/>
            <person name="Bruce D."/>
            <person name="Han C."/>
            <person name="Schmutz J."/>
            <person name="Larimer F."/>
            <person name="Land M.L."/>
            <person name="Hauser L."/>
            <person name="Kyrpides N."/>
            <person name="Mikhailova N."/>
            <person name="Ye Q."/>
            <person name="Zhou J."/>
            <person name="Richardson P."/>
            <person name="Fields M.W."/>
        </authorList>
    </citation>
    <scope>NUCLEOTIDE SEQUENCE [LARGE SCALE GENOMIC DNA]</scope>
    <source>
        <strain>QYMF</strain>
    </source>
</reference>
<name>RL11_ALKMQ</name>
<keyword id="KW-0488">Methylation</keyword>
<keyword id="KW-1185">Reference proteome</keyword>
<keyword id="KW-0687">Ribonucleoprotein</keyword>
<keyword id="KW-0689">Ribosomal protein</keyword>
<keyword id="KW-0694">RNA-binding</keyword>
<keyword id="KW-0699">rRNA-binding</keyword>
<organism>
    <name type="scientific">Alkaliphilus metalliredigens (strain QYMF)</name>
    <dbReference type="NCBI Taxonomy" id="293826"/>
    <lineage>
        <taxon>Bacteria</taxon>
        <taxon>Bacillati</taxon>
        <taxon>Bacillota</taxon>
        <taxon>Clostridia</taxon>
        <taxon>Peptostreptococcales</taxon>
        <taxon>Natronincolaceae</taxon>
        <taxon>Alkaliphilus</taxon>
    </lineage>
</organism>
<protein>
    <recommendedName>
        <fullName evidence="1">Large ribosomal subunit protein uL11</fullName>
    </recommendedName>
    <alternativeName>
        <fullName evidence="2">50S ribosomal protein L11</fullName>
    </alternativeName>
</protein>
<accession>A6TWJ4</accession>
<feature type="chain" id="PRO_1000062131" description="Large ribosomal subunit protein uL11">
    <location>
        <begin position="1"/>
        <end position="141"/>
    </location>
</feature>
<dbReference type="EMBL" id="CP000724">
    <property type="protein sequence ID" value="ABR50562.1"/>
    <property type="molecule type" value="Genomic_DNA"/>
</dbReference>
<dbReference type="RefSeq" id="WP_012065453.1">
    <property type="nucleotide sequence ID" value="NC_009633.1"/>
</dbReference>
<dbReference type="SMR" id="A6TWJ4"/>
<dbReference type="STRING" id="293826.Amet_4490"/>
<dbReference type="KEGG" id="amt:Amet_4490"/>
<dbReference type="eggNOG" id="COG0080">
    <property type="taxonomic scope" value="Bacteria"/>
</dbReference>
<dbReference type="HOGENOM" id="CLU_074237_2_1_9"/>
<dbReference type="OrthoDB" id="9802408at2"/>
<dbReference type="Proteomes" id="UP000001572">
    <property type="component" value="Chromosome"/>
</dbReference>
<dbReference type="GO" id="GO:0022625">
    <property type="term" value="C:cytosolic large ribosomal subunit"/>
    <property type="evidence" value="ECO:0007669"/>
    <property type="project" value="TreeGrafter"/>
</dbReference>
<dbReference type="GO" id="GO:0070180">
    <property type="term" value="F:large ribosomal subunit rRNA binding"/>
    <property type="evidence" value="ECO:0007669"/>
    <property type="project" value="UniProtKB-UniRule"/>
</dbReference>
<dbReference type="GO" id="GO:0003735">
    <property type="term" value="F:structural constituent of ribosome"/>
    <property type="evidence" value="ECO:0007669"/>
    <property type="project" value="InterPro"/>
</dbReference>
<dbReference type="GO" id="GO:0006412">
    <property type="term" value="P:translation"/>
    <property type="evidence" value="ECO:0007669"/>
    <property type="project" value="UniProtKB-UniRule"/>
</dbReference>
<dbReference type="CDD" id="cd00349">
    <property type="entry name" value="Ribosomal_L11"/>
    <property type="match status" value="1"/>
</dbReference>
<dbReference type="FunFam" id="1.10.10.250:FF:000001">
    <property type="entry name" value="50S ribosomal protein L11"/>
    <property type="match status" value="1"/>
</dbReference>
<dbReference type="FunFam" id="3.30.1550.10:FF:000001">
    <property type="entry name" value="50S ribosomal protein L11"/>
    <property type="match status" value="1"/>
</dbReference>
<dbReference type="Gene3D" id="1.10.10.250">
    <property type="entry name" value="Ribosomal protein L11, C-terminal domain"/>
    <property type="match status" value="1"/>
</dbReference>
<dbReference type="Gene3D" id="3.30.1550.10">
    <property type="entry name" value="Ribosomal protein L11/L12, N-terminal domain"/>
    <property type="match status" value="1"/>
</dbReference>
<dbReference type="HAMAP" id="MF_00736">
    <property type="entry name" value="Ribosomal_uL11"/>
    <property type="match status" value="1"/>
</dbReference>
<dbReference type="InterPro" id="IPR000911">
    <property type="entry name" value="Ribosomal_uL11"/>
</dbReference>
<dbReference type="InterPro" id="IPR006519">
    <property type="entry name" value="Ribosomal_uL11_bac-typ"/>
</dbReference>
<dbReference type="InterPro" id="IPR020783">
    <property type="entry name" value="Ribosomal_uL11_C"/>
</dbReference>
<dbReference type="InterPro" id="IPR036769">
    <property type="entry name" value="Ribosomal_uL11_C_sf"/>
</dbReference>
<dbReference type="InterPro" id="IPR020784">
    <property type="entry name" value="Ribosomal_uL11_N"/>
</dbReference>
<dbReference type="InterPro" id="IPR036796">
    <property type="entry name" value="Ribosomal_uL11_N_sf"/>
</dbReference>
<dbReference type="NCBIfam" id="TIGR01632">
    <property type="entry name" value="L11_bact"/>
    <property type="match status" value="1"/>
</dbReference>
<dbReference type="PANTHER" id="PTHR11661">
    <property type="entry name" value="60S RIBOSOMAL PROTEIN L12"/>
    <property type="match status" value="1"/>
</dbReference>
<dbReference type="PANTHER" id="PTHR11661:SF1">
    <property type="entry name" value="LARGE RIBOSOMAL SUBUNIT PROTEIN UL11M"/>
    <property type="match status" value="1"/>
</dbReference>
<dbReference type="Pfam" id="PF00298">
    <property type="entry name" value="Ribosomal_L11"/>
    <property type="match status" value="1"/>
</dbReference>
<dbReference type="Pfam" id="PF03946">
    <property type="entry name" value="Ribosomal_L11_N"/>
    <property type="match status" value="1"/>
</dbReference>
<dbReference type="SMART" id="SM00649">
    <property type="entry name" value="RL11"/>
    <property type="match status" value="1"/>
</dbReference>
<dbReference type="SUPFAM" id="SSF54747">
    <property type="entry name" value="Ribosomal L11/L12e N-terminal domain"/>
    <property type="match status" value="1"/>
</dbReference>
<dbReference type="SUPFAM" id="SSF46906">
    <property type="entry name" value="Ribosomal protein L11, C-terminal domain"/>
    <property type="match status" value="1"/>
</dbReference>
<gene>
    <name evidence="1" type="primary">rplK</name>
    <name type="ordered locus">Amet_4490</name>
</gene>
<comment type="function">
    <text evidence="1">Forms part of the ribosomal stalk which helps the ribosome interact with GTP-bound translation factors.</text>
</comment>
<comment type="subunit">
    <text evidence="1">Part of the ribosomal stalk of the 50S ribosomal subunit. Interacts with L10 and the large rRNA to form the base of the stalk. L10 forms an elongated spine to which L12 dimers bind in a sequential fashion forming a multimeric L10(L12)X complex.</text>
</comment>
<comment type="PTM">
    <text evidence="1">One or more lysine residues are methylated.</text>
</comment>
<comment type="similarity">
    <text evidence="1">Belongs to the universal ribosomal protein uL11 family.</text>
</comment>
<sequence>MAKKVVGQIKLQIPAGKATPAPPVGPALGQHGVNIMGFCKEFNAKTADQAGMIIPVIISVYQDRSYTFITKTPPAAILIKKAAGIDKASGEPHTKKVATISKAKVKEIAELKMPDLNASSVESAMSMIAGTARSMGVVVED</sequence>
<proteinExistence type="inferred from homology"/>